<sequence length="218" mass="24252">MGCSASKDTTNSKDGAASKGGKDGKTTADRKVAWERIRCAIPRDKDAESKSRRIELFKQFDTNGTGKLGFREVLDGCYGILKLDEFTTHLPDIVQRAFDKAKDLGNKVKGVGEEDLVEFLEFRLMLCYIYDIFELTVMFDTMDKDGSLLLELQEFKEALPKLKEWGVDITDATTVFNEIDTNGSGVVTFDEFSCWAVTKKLQVCGDPDGEENGANEGN</sequence>
<reference key="1">
    <citation type="journal article" date="1994" name="Biochem. J.">
        <title>The gene family of EF-hand calcium-binding proteins from the flagellum of Trypanosoma brucei.</title>
        <authorList>
            <person name="Wu Y."/>
            <person name="Deford J."/>
            <person name="Benjamin R."/>
            <person name="Lee M.G.-S."/>
            <person name="Ruben L."/>
        </authorList>
    </citation>
    <scope>NUCLEOTIDE SEQUENCE [GENOMIC DNA]</scope>
    <source>
        <strain>427</strain>
    </source>
</reference>
<proteinExistence type="evidence at protein level"/>
<feature type="chain" id="PRO_0000073737" description="Flagellar calcium-binding protein TB-24">
    <location>
        <begin position="1"/>
        <end position="218"/>
    </location>
</feature>
<feature type="domain" description="EF-hand 1" evidence="1">
    <location>
        <begin position="48"/>
        <end position="83"/>
    </location>
</feature>
<feature type="domain" description="EF-hand 2" evidence="3">
    <location>
        <begin position="84"/>
        <end position="119"/>
    </location>
</feature>
<feature type="domain" description="EF-hand 3" evidence="1">
    <location>
        <begin position="130"/>
        <end position="165"/>
    </location>
</feature>
<feature type="domain" description="EF-hand 4" evidence="1">
    <location>
        <begin position="167"/>
        <end position="202"/>
    </location>
</feature>
<feature type="region of interest" description="Disordered" evidence="2">
    <location>
        <begin position="1"/>
        <end position="27"/>
    </location>
</feature>
<feature type="binding site" evidence="1">
    <location>
        <position position="61"/>
    </location>
    <ligand>
        <name>Ca(2+)</name>
        <dbReference type="ChEBI" id="CHEBI:29108"/>
        <label>1</label>
    </ligand>
</feature>
<feature type="binding site" evidence="1">
    <location>
        <position position="63"/>
    </location>
    <ligand>
        <name>Ca(2+)</name>
        <dbReference type="ChEBI" id="CHEBI:29108"/>
        <label>1</label>
    </ligand>
</feature>
<feature type="binding site" evidence="1">
    <location>
        <position position="65"/>
    </location>
    <ligand>
        <name>Ca(2+)</name>
        <dbReference type="ChEBI" id="CHEBI:29108"/>
        <label>1</label>
    </ligand>
</feature>
<feature type="binding site" evidence="1">
    <location>
        <position position="67"/>
    </location>
    <ligand>
        <name>Ca(2+)</name>
        <dbReference type="ChEBI" id="CHEBI:29108"/>
        <label>1</label>
    </ligand>
</feature>
<feature type="binding site" evidence="1">
    <location>
        <position position="72"/>
    </location>
    <ligand>
        <name>Ca(2+)</name>
        <dbReference type="ChEBI" id="CHEBI:29108"/>
        <label>1</label>
    </ligand>
</feature>
<feature type="binding site" evidence="3">
    <location>
        <position position="143"/>
    </location>
    <ligand>
        <name>Ca(2+)</name>
        <dbReference type="ChEBI" id="CHEBI:29108"/>
        <label>2</label>
    </ligand>
</feature>
<feature type="binding site" evidence="3">
    <location>
        <position position="145"/>
    </location>
    <ligand>
        <name>Ca(2+)</name>
        <dbReference type="ChEBI" id="CHEBI:29108"/>
        <label>2</label>
    </ligand>
</feature>
<feature type="binding site" evidence="3">
    <location>
        <position position="147"/>
    </location>
    <ligand>
        <name>Ca(2+)</name>
        <dbReference type="ChEBI" id="CHEBI:29108"/>
        <label>2</label>
    </ligand>
</feature>
<feature type="binding site" evidence="3">
    <location>
        <position position="154"/>
    </location>
    <ligand>
        <name>Ca(2+)</name>
        <dbReference type="ChEBI" id="CHEBI:29108"/>
        <label>2</label>
    </ligand>
</feature>
<feature type="binding site" evidence="1">
    <location>
        <position position="180"/>
    </location>
    <ligand>
        <name>Ca(2+)</name>
        <dbReference type="ChEBI" id="CHEBI:29108"/>
        <label>3</label>
    </ligand>
</feature>
<feature type="binding site" evidence="1">
    <location>
        <position position="182"/>
    </location>
    <ligand>
        <name>Ca(2+)</name>
        <dbReference type="ChEBI" id="CHEBI:29108"/>
        <label>3</label>
    </ligand>
</feature>
<feature type="binding site" evidence="1">
    <location>
        <position position="184"/>
    </location>
    <ligand>
        <name>Ca(2+)</name>
        <dbReference type="ChEBI" id="CHEBI:29108"/>
        <label>3</label>
    </ligand>
</feature>
<feature type="binding site" evidence="1">
    <location>
        <position position="191"/>
    </location>
    <ligand>
        <name>Ca(2+)</name>
        <dbReference type="ChEBI" id="CHEBI:29108"/>
        <label>3</label>
    </ligand>
</feature>
<feature type="strand" evidence="4">
    <location>
        <begin position="20"/>
        <end position="22"/>
    </location>
</feature>
<feature type="helix" evidence="4">
    <location>
        <begin position="27"/>
        <end position="40"/>
    </location>
</feature>
<feature type="helix" evidence="4">
    <location>
        <begin position="47"/>
        <end position="60"/>
    </location>
</feature>
<feature type="helix" evidence="4">
    <location>
        <begin position="61"/>
        <end position="63"/>
    </location>
</feature>
<feature type="helix" evidence="4">
    <location>
        <begin position="71"/>
        <end position="79"/>
    </location>
</feature>
<feature type="turn" evidence="4">
    <location>
        <begin position="84"/>
        <end position="86"/>
    </location>
</feature>
<feature type="strand" evidence="4">
    <location>
        <begin position="87"/>
        <end position="89"/>
    </location>
</feature>
<feature type="helix" evidence="4">
    <location>
        <begin position="91"/>
        <end position="108"/>
    </location>
</feature>
<feature type="helix" evidence="4">
    <location>
        <begin position="119"/>
        <end position="142"/>
    </location>
</feature>
<feature type="helix" evidence="4">
    <location>
        <begin position="152"/>
        <end position="165"/>
    </location>
</feature>
<feature type="helix" evidence="4">
    <location>
        <begin position="173"/>
        <end position="179"/>
    </location>
</feature>
<feature type="helix" evidence="4">
    <location>
        <begin position="189"/>
        <end position="204"/>
    </location>
</feature>
<feature type="strand" evidence="4">
    <location>
        <begin position="209"/>
        <end position="211"/>
    </location>
</feature>
<protein>
    <recommendedName>
        <fullName>Flagellar calcium-binding protein TB-24</fullName>
    </recommendedName>
    <alternativeName>
        <fullName>24 kDa calcimedin</fullName>
    </alternativeName>
    <alternativeName>
        <fullName>24 kDa calflagin</fullName>
    </alternativeName>
</protein>
<accession>Q26680</accession>
<comment type="function">
    <text>May contribute to the rapid motility of the trypanosomes, playing a role either in flagellar structure or in calcium metabolism. Could alternate between a GDP-bound inactive form to a calcium/GTP-bound active form.</text>
</comment>
<comment type="subcellular location">
    <subcellularLocation>
        <location>Cell projection</location>
        <location>Cilium</location>
        <location>Flagellum</location>
    </subcellularLocation>
</comment>
<comment type="domain">
    <text>This protein has four EF-hand domains, three of which may be functional calcium-binding sites.</text>
</comment>
<comment type="similarity">
    <text evidence="3">Belongs to the calflagin family.</text>
</comment>
<name>FCA2_TRYBB</name>
<dbReference type="EMBL" id="U06644">
    <property type="protein sequence ID" value="AAB40004.1"/>
    <property type="molecule type" value="Genomic_DNA"/>
</dbReference>
<dbReference type="PIR" id="S53354">
    <property type="entry name" value="S53354"/>
</dbReference>
<dbReference type="PDB" id="2LVV">
    <property type="method" value="NMR"/>
    <property type="chains" value="A=1-218"/>
</dbReference>
<dbReference type="PDBsum" id="2LVV"/>
<dbReference type="BMRB" id="Q26680"/>
<dbReference type="SMR" id="Q26680"/>
<dbReference type="SwissPalm" id="Q26680"/>
<dbReference type="EvolutionaryTrace" id="Q26680"/>
<dbReference type="GO" id="GO:0031514">
    <property type="term" value="C:motile cilium"/>
    <property type="evidence" value="ECO:0007669"/>
    <property type="project" value="UniProtKB-SubCell"/>
</dbReference>
<dbReference type="GO" id="GO:0005509">
    <property type="term" value="F:calcium ion binding"/>
    <property type="evidence" value="ECO:0007669"/>
    <property type="project" value="InterPro"/>
</dbReference>
<dbReference type="CDD" id="cd00051">
    <property type="entry name" value="EFh"/>
    <property type="match status" value="1"/>
</dbReference>
<dbReference type="DisProt" id="DP01669"/>
<dbReference type="FunFam" id="1.10.238.10:FF:000433">
    <property type="entry name" value="Flagellar calcium-binding protein TB-24"/>
    <property type="match status" value="1"/>
</dbReference>
<dbReference type="Gene3D" id="1.10.238.10">
    <property type="entry name" value="EF-hand"/>
    <property type="match status" value="1"/>
</dbReference>
<dbReference type="InterPro" id="IPR003299">
    <property type="entry name" value="Calflagin-bd"/>
</dbReference>
<dbReference type="InterPro" id="IPR011992">
    <property type="entry name" value="EF-hand-dom_pair"/>
</dbReference>
<dbReference type="InterPro" id="IPR018247">
    <property type="entry name" value="EF_Hand_1_Ca_BS"/>
</dbReference>
<dbReference type="InterPro" id="IPR002048">
    <property type="entry name" value="EF_hand_dom"/>
</dbReference>
<dbReference type="InterPro" id="IPR054322">
    <property type="entry name" value="FCABP_EF-hand"/>
</dbReference>
<dbReference type="Pfam" id="PF13499">
    <property type="entry name" value="EF-hand_7"/>
    <property type="match status" value="1"/>
</dbReference>
<dbReference type="Pfam" id="PF22592">
    <property type="entry name" value="FCaBP_EF-hand"/>
    <property type="match status" value="1"/>
</dbReference>
<dbReference type="PRINTS" id="PR01362">
    <property type="entry name" value="CALFLAGIN"/>
</dbReference>
<dbReference type="SMART" id="SM00054">
    <property type="entry name" value="EFh"/>
    <property type="match status" value="3"/>
</dbReference>
<dbReference type="SUPFAM" id="SSF47473">
    <property type="entry name" value="EF-hand"/>
    <property type="match status" value="1"/>
</dbReference>
<dbReference type="PROSITE" id="PS00018">
    <property type="entry name" value="EF_HAND_1"/>
    <property type="match status" value="2"/>
</dbReference>
<dbReference type="PROSITE" id="PS50222">
    <property type="entry name" value="EF_HAND_2"/>
    <property type="match status" value="3"/>
</dbReference>
<evidence type="ECO:0000255" key="1">
    <source>
        <dbReference type="PROSITE-ProRule" id="PRU00448"/>
    </source>
</evidence>
<evidence type="ECO:0000256" key="2">
    <source>
        <dbReference type="SAM" id="MobiDB-lite"/>
    </source>
</evidence>
<evidence type="ECO:0000305" key="3"/>
<evidence type="ECO:0007829" key="4">
    <source>
        <dbReference type="PDB" id="2LVV"/>
    </source>
</evidence>
<keyword id="KW-0002">3D-structure</keyword>
<keyword id="KW-0106">Calcium</keyword>
<keyword id="KW-0966">Cell projection</keyword>
<keyword id="KW-0969">Cilium</keyword>
<keyword id="KW-0282">Flagellum</keyword>
<keyword id="KW-0479">Metal-binding</keyword>
<keyword id="KW-0677">Repeat</keyword>
<organism>
    <name type="scientific">Trypanosoma brucei brucei</name>
    <dbReference type="NCBI Taxonomy" id="5702"/>
    <lineage>
        <taxon>Eukaryota</taxon>
        <taxon>Discoba</taxon>
        <taxon>Euglenozoa</taxon>
        <taxon>Kinetoplastea</taxon>
        <taxon>Metakinetoplastina</taxon>
        <taxon>Trypanosomatida</taxon>
        <taxon>Trypanosomatidae</taxon>
        <taxon>Trypanosoma</taxon>
    </lineage>
</organism>